<protein>
    <recommendedName>
        <fullName evidence="1">Glutamate--cysteine ligase</fullName>
        <ecNumber evidence="1">6.3.2.2</ecNumber>
    </recommendedName>
    <alternativeName>
        <fullName evidence="1">Gamma-ECS</fullName>
        <shortName evidence="1">GCS</shortName>
    </alternativeName>
    <alternativeName>
        <fullName evidence="1">Gamma-glutamylcysteine synthetase</fullName>
    </alternativeName>
</protein>
<gene>
    <name evidence="1" type="primary">gshA</name>
    <name type="ordered locus">KPK_1108</name>
</gene>
<name>GSH1_KLEP3</name>
<proteinExistence type="inferred from homology"/>
<evidence type="ECO:0000255" key="1">
    <source>
        <dbReference type="HAMAP-Rule" id="MF_00578"/>
    </source>
</evidence>
<sequence length="518" mass="58085">MIPDVSQALAWLEKHPQALQGIQRGLERETLRVNADGTLATTGHPLALGSALTHKWITTDFAEALLEFITPVDGDIEHMLTFMRDVHRYTARQLGDERMWPLSMPCYIAPGQDIELAQYGTSNVGRLKTLYREGLKNRYGALMQTISGVHYNFSLPMAFWQAKCGVEDVESGKEAISAGYFRSIRNYYRFGWVIPYLFGASPAICSSFLQGKPTTLPFEEAGNGMYYLPYATSLRLSDLGYTNKSQSNLGITFNDLHEYVAGLKRAIKTPSEEYAKIGLQKDGKYLQINSNILQIENELYAPIRPKRVTRRGETPSDALLRGGIEYIEVRSLDINPFSPIGVDAQQVRFLDLFMVWCALADAPEMSSDELLCTRTNWNRVILEGRKPGLTLGIGCESAQFPLAQVGKDLFRDLRRVAQTLDSIHGGQAYQQVCDELLACFDDPELTFSARILRSMIEEGIGGTGRALADRYRTQLREEPLEILSEADFIAEREASVARQKKVEAEDSEPFEALLARHA</sequence>
<feature type="chain" id="PRO_1000129597" description="Glutamate--cysteine ligase">
    <location>
        <begin position="1"/>
        <end position="518"/>
    </location>
</feature>
<reference key="1">
    <citation type="journal article" date="2008" name="PLoS Genet.">
        <title>Complete genome sequence of the N2-fixing broad host range endophyte Klebsiella pneumoniae 342 and virulence predictions verified in mice.</title>
        <authorList>
            <person name="Fouts D.E."/>
            <person name="Tyler H.L."/>
            <person name="DeBoy R.T."/>
            <person name="Daugherty S."/>
            <person name="Ren Q."/>
            <person name="Badger J.H."/>
            <person name="Durkin A.S."/>
            <person name="Huot H."/>
            <person name="Shrivastava S."/>
            <person name="Kothari S."/>
            <person name="Dodson R.J."/>
            <person name="Mohamoud Y."/>
            <person name="Khouri H."/>
            <person name="Roesch L.F.W."/>
            <person name="Krogfelt K.A."/>
            <person name="Struve C."/>
            <person name="Triplett E.W."/>
            <person name="Methe B.A."/>
        </authorList>
    </citation>
    <scope>NUCLEOTIDE SEQUENCE [LARGE SCALE GENOMIC DNA]</scope>
    <source>
        <strain>342</strain>
    </source>
</reference>
<comment type="catalytic activity">
    <reaction evidence="1">
        <text>L-cysteine + L-glutamate + ATP = gamma-L-glutamyl-L-cysteine + ADP + phosphate + H(+)</text>
        <dbReference type="Rhea" id="RHEA:13285"/>
        <dbReference type="ChEBI" id="CHEBI:15378"/>
        <dbReference type="ChEBI" id="CHEBI:29985"/>
        <dbReference type="ChEBI" id="CHEBI:30616"/>
        <dbReference type="ChEBI" id="CHEBI:35235"/>
        <dbReference type="ChEBI" id="CHEBI:43474"/>
        <dbReference type="ChEBI" id="CHEBI:58173"/>
        <dbReference type="ChEBI" id="CHEBI:456216"/>
        <dbReference type="EC" id="6.3.2.2"/>
    </reaction>
</comment>
<comment type="pathway">
    <text evidence="1">Sulfur metabolism; glutathione biosynthesis; glutathione from L-cysteine and L-glutamate: step 1/2.</text>
</comment>
<comment type="similarity">
    <text evidence="1">Belongs to the glutamate--cysteine ligase type 1 family. Type 1 subfamily.</text>
</comment>
<organism>
    <name type="scientific">Klebsiella pneumoniae (strain 342)</name>
    <dbReference type="NCBI Taxonomy" id="507522"/>
    <lineage>
        <taxon>Bacteria</taxon>
        <taxon>Pseudomonadati</taxon>
        <taxon>Pseudomonadota</taxon>
        <taxon>Gammaproteobacteria</taxon>
        <taxon>Enterobacterales</taxon>
        <taxon>Enterobacteriaceae</taxon>
        <taxon>Klebsiella/Raoultella group</taxon>
        <taxon>Klebsiella</taxon>
        <taxon>Klebsiella pneumoniae complex</taxon>
    </lineage>
</organism>
<keyword id="KW-0067">ATP-binding</keyword>
<keyword id="KW-0317">Glutathione biosynthesis</keyword>
<keyword id="KW-0436">Ligase</keyword>
<keyword id="KW-0547">Nucleotide-binding</keyword>
<accession>B5XVC3</accession>
<dbReference type="EC" id="6.3.2.2" evidence="1"/>
<dbReference type="EMBL" id="CP000964">
    <property type="protein sequence ID" value="ACI08599.1"/>
    <property type="molecule type" value="Genomic_DNA"/>
</dbReference>
<dbReference type="SMR" id="B5XVC3"/>
<dbReference type="KEGG" id="kpe:KPK_1108"/>
<dbReference type="HOGENOM" id="CLU_020728_3_0_6"/>
<dbReference type="UniPathway" id="UPA00142">
    <property type="reaction ID" value="UER00209"/>
</dbReference>
<dbReference type="Proteomes" id="UP000001734">
    <property type="component" value="Chromosome"/>
</dbReference>
<dbReference type="GO" id="GO:0005829">
    <property type="term" value="C:cytosol"/>
    <property type="evidence" value="ECO:0007669"/>
    <property type="project" value="TreeGrafter"/>
</dbReference>
<dbReference type="GO" id="GO:0005524">
    <property type="term" value="F:ATP binding"/>
    <property type="evidence" value="ECO:0007669"/>
    <property type="project" value="UniProtKB-KW"/>
</dbReference>
<dbReference type="GO" id="GO:0004357">
    <property type="term" value="F:glutamate-cysteine ligase activity"/>
    <property type="evidence" value="ECO:0007669"/>
    <property type="project" value="UniProtKB-UniRule"/>
</dbReference>
<dbReference type="GO" id="GO:0046872">
    <property type="term" value="F:metal ion binding"/>
    <property type="evidence" value="ECO:0007669"/>
    <property type="project" value="TreeGrafter"/>
</dbReference>
<dbReference type="GO" id="GO:0006750">
    <property type="term" value="P:glutathione biosynthetic process"/>
    <property type="evidence" value="ECO:0007669"/>
    <property type="project" value="UniProtKB-UniRule"/>
</dbReference>
<dbReference type="FunFam" id="3.30.590.20:FF:000001">
    <property type="entry name" value="Glutamate--cysteine ligase"/>
    <property type="match status" value="1"/>
</dbReference>
<dbReference type="Gene3D" id="3.30.590.20">
    <property type="match status" value="1"/>
</dbReference>
<dbReference type="HAMAP" id="MF_00578">
    <property type="entry name" value="Glu_cys_ligase"/>
    <property type="match status" value="1"/>
</dbReference>
<dbReference type="InterPro" id="IPR014746">
    <property type="entry name" value="Gln_synth/guanido_kin_cat_dom"/>
</dbReference>
<dbReference type="InterPro" id="IPR007370">
    <property type="entry name" value="Glu_cys_ligase"/>
</dbReference>
<dbReference type="InterPro" id="IPR006334">
    <property type="entry name" value="Glut_cys_ligase"/>
</dbReference>
<dbReference type="NCBIfam" id="TIGR01434">
    <property type="entry name" value="glu_cys_ligase"/>
    <property type="match status" value="1"/>
</dbReference>
<dbReference type="PANTHER" id="PTHR38761">
    <property type="entry name" value="GLUTAMATE--CYSTEINE LIGASE"/>
    <property type="match status" value="1"/>
</dbReference>
<dbReference type="PANTHER" id="PTHR38761:SF1">
    <property type="entry name" value="GLUTAMATE--CYSTEINE LIGASE"/>
    <property type="match status" value="1"/>
</dbReference>
<dbReference type="Pfam" id="PF04262">
    <property type="entry name" value="Glu_cys_ligase"/>
    <property type="match status" value="1"/>
</dbReference>
<dbReference type="SUPFAM" id="SSF55931">
    <property type="entry name" value="Glutamine synthetase/guanido kinase"/>
    <property type="match status" value="1"/>
</dbReference>